<accession>Q0RDH6</accession>
<protein>
    <recommendedName>
        <fullName evidence="1">tRNA-specific 2-thiouridylase MnmA</fullName>
        <ecNumber evidence="1">2.8.1.13</ecNumber>
    </recommendedName>
</protein>
<proteinExistence type="inferred from homology"/>
<comment type="function">
    <text evidence="1">Catalyzes the 2-thiolation of uridine at the wobble position (U34) of tRNA, leading to the formation of s(2)U34.</text>
</comment>
<comment type="catalytic activity">
    <reaction evidence="1">
        <text>S-sulfanyl-L-cysteinyl-[protein] + uridine(34) in tRNA + AH2 + ATP = 2-thiouridine(34) in tRNA + L-cysteinyl-[protein] + A + AMP + diphosphate + H(+)</text>
        <dbReference type="Rhea" id="RHEA:47032"/>
        <dbReference type="Rhea" id="RHEA-COMP:10131"/>
        <dbReference type="Rhea" id="RHEA-COMP:11726"/>
        <dbReference type="Rhea" id="RHEA-COMP:11727"/>
        <dbReference type="Rhea" id="RHEA-COMP:11728"/>
        <dbReference type="ChEBI" id="CHEBI:13193"/>
        <dbReference type="ChEBI" id="CHEBI:15378"/>
        <dbReference type="ChEBI" id="CHEBI:17499"/>
        <dbReference type="ChEBI" id="CHEBI:29950"/>
        <dbReference type="ChEBI" id="CHEBI:30616"/>
        <dbReference type="ChEBI" id="CHEBI:33019"/>
        <dbReference type="ChEBI" id="CHEBI:61963"/>
        <dbReference type="ChEBI" id="CHEBI:65315"/>
        <dbReference type="ChEBI" id="CHEBI:87170"/>
        <dbReference type="ChEBI" id="CHEBI:456215"/>
        <dbReference type="EC" id="2.8.1.13"/>
    </reaction>
</comment>
<comment type="subcellular location">
    <subcellularLocation>
        <location evidence="1">Cytoplasm</location>
    </subcellularLocation>
</comment>
<comment type="similarity">
    <text evidence="1">Belongs to the MnmA/TRMU family.</text>
</comment>
<keyword id="KW-0067">ATP-binding</keyword>
<keyword id="KW-0963">Cytoplasm</keyword>
<keyword id="KW-1015">Disulfide bond</keyword>
<keyword id="KW-0547">Nucleotide-binding</keyword>
<keyword id="KW-1185">Reference proteome</keyword>
<keyword id="KW-0694">RNA-binding</keyword>
<keyword id="KW-0808">Transferase</keyword>
<keyword id="KW-0819">tRNA processing</keyword>
<keyword id="KW-0820">tRNA-binding</keyword>
<reference key="1">
    <citation type="journal article" date="2007" name="Genome Res.">
        <title>Genome characteristics of facultatively symbiotic Frankia sp. strains reflect host range and host plant biogeography.</title>
        <authorList>
            <person name="Normand P."/>
            <person name="Lapierre P."/>
            <person name="Tisa L.S."/>
            <person name="Gogarten J.P."/>
            <person name="Alloisio N."/>
            <person name="Bagnarol E."/>
            <person name="Bassi C.A."/>
            <person name="Berry A.M."/>
            <person name="Bickhart D.M."/>
            <person name="Choisne N."/>
            <person name="Couloux A."/>
            <person name="Cournoyer B."/>
            <person name="Cruveiller S."/>
            <person name="Daubin V."/>
            <person name="Demange N."/>
            <person name="Francino M.P."/>
            <person name="Goltsman E."/>
            <person name="Huang Y."/>
            <person name="Kopp O.R."/>
            <person name="Labarre L."/>
            <person name="Lapidus A."/>
            <person name="Lavire C."/>
            <person name="Marechal J."/>
            <person name="Martinez M."/>
            <person name="Mastronunzio J.E."/>
            <person name="Mullin B.C."/>
            <person name="Niemann J."/>
            <person name="Pujic P."/>
            <person name="Rawnsley T."/>
            <person name="Rouy Z."/>
            <person name="Schenowitz C."/>
            <person name="Sellstedt A."/>
            <person name="Tavares F."/>
            <person name="Tomkins J.P."/>
            <person name="Vallenet D."/>
            <person name="Valverde C."/>
            <person name="Wall L.G."/>
            <person name="Wang Y."/>
            <person name="Medigue C."/>
            <person name="Benson D.R."/>
        </authorList>
    </citation>
    <scope>NUCLEOTIDE SEQUENCE [LARGE SCALE GENOMIC DNA]</scope>
    <source>
        <strain>DSM 45986 / CECT 9034 / ACN14a</strain>
    </source>
</reference>
<organism>
    <name type="scientific">Frankia alni (strain DSM 45986 / CECT 9034 / ACN14a)</name>
    <dbReference type="NCBI Taxonomy" id="326424"/>
    <lineage>
        <taxon>Bacteria</taxon>
        <taxon>Bacillati</taxon>
        <taxon>Actinomycetota</taxon>
        <taxon>Actinomycetes</taxon>
        <taxon>Frankiales</taxon>
        <taxon>Frankiaceae</taxon>
        <taxon>Frankia</taxon>
    </lineage>
</organism>
<dbReference type="EC" id="2.8.1.13" evidence="1"/>
<dbReference type="EMBL" id="CT573213">
    <property type="protein sequence ID" value="CAJ64493.1"/>
    <property type="molecule type" value="Genomic_DNA"/>
</dbReference>
<dbReference type="RefSeq" id="WP_011606929.1">
    <property type="nucleotide sequence ID" value="NC_008278.1"/>
</dbReference>
<dbReference type="SMR" id="Q0RDH6"/>
<dbReference type="STRING" id="326424.FRAAL5861"/>
<dbReference type="KEGG" id="fal:FRAAL5861"/>
<dbReference type="eggNOG" id="COG0482">
    <property type="taxonomic scope" value="Bacteria"/>
</dbReference>
<dbReference type="HOGENOM" id="CLU_035188_0_2_11"/>
<dbReference type="OrthoDB" id="9800696at2"/>
<dbReference type="Proteomes" id="UP000000657">
    <property type="component" value="Chromosome"/>
</dbReference>
<dbReference type="GO" id="GO:0005737">
    <property type="term" value="C:cytoplasm"/>
    <property type="evidence" value="ECO:0007669"/>
    <property type="project" value="UniProtKB-SubCell"/>
</dbReference>
<dbReference type="GO" id="GO:0005524">
    <property type="term" value="F:ATP binding"/>
    <property type="evidence" value="ECO:0007669"/>
    <property type="project" value="UniProtKB-KW"/>
</dbReference>
<dbReference type="GO" id="GO:0000049">
    <property type="term" value="F:tRNA binding"/>
    <property type="evidence" value="ECO:0007669"/>
    <property type="project" value="UniProtKB-KW"/>
</dbReference>
<dbReference type="GO" id="GO:0103016">
    <property type="term" value="F:tRNA-uridine 2-sulfurtransferase activity"/>
    <property type="evidence" value="ECO:0007669"/>
    <property type="project" value="UniProtKB-EC"/>
</dbReference>
<dbReference type="GO" id="GO:0002143">
    <property type="term" value="P:tRNA wobble position uridine thiolation"/>
    <property type="evidence" value="ECO:0007669"/>
    <property type="project" value="TreeGrafter"/>
</dbReference>
<dbReference type="CDD" id="cd01998">
    <property type="entry name" value="MnmA_TRMU-like"/>
    <property type="match status" value="1"/>
</dbReference>
<dbReference type="FunFam" id="3.40.50.620:FF:000057">
    <property type="entry name" value="tRNA-specific 2-thiouridylase MnmA"/>
    <property type="match status" value="1"/>
</dbReference>
<dbReference type="Gene3D" id="2.30.30.280">
    <property type="entry name" value="Adenine nucleotide alpha hydrolases-like domains"/>
    <property type="match status" value="1"/>
</dbReference>
<dbReference type="Gene3D" id="3.40.50.620">
    <property type="entry name" value="HUPs"/>
    <property type="match status" value="1"/>
</dbReference>
<dbReference type="Gene3D" id="2.40.30.10">
    <property type="entry name" value="Translation factors"/>
    <property type="match status" value="1"/>
</dbReference>
<dbReference type="HAMAP" id="MF_00144">
    <property type="entry name" value="tRNA_thiouridyl_MnmA"/>
    <property type="match status" value="1"/>
</dbReference>
<dbReference type="InterPro" id="IPR004506">
    <property type="entry name" value="MnmA-like"/>
</dbReference>
<dbReference type="InterPro" id="IPR046885">
    <property type="entry name" value="MnmA-like_C"/>
</dbReference>
<dbReference type="InterPro" id="IPR046884">
    <property type="entry name" value="MnmA-like_central"/>
</dbReference>
<dbReference type="InterPro" id="IPR023382">
    <property type="entry name" value="MnmA-like_central_sf"/>
</dbReference>
<dbReference type="InterPro" id="IPR014729">
    <property type="entry name" value="Rossmann-like_a/b/a_fold"/>
</dbReference>
<dbReference type="NCBIfam" id="NF001138">
    <property type="entry name" value="PRK00143.1"/>
    <property type="match status" value="1"/>
</dbReference>
<dbReference type="NCBIfam" id="TIGR00420">
    <property type="entry name" value="trmU"/>
    <property type="match status" value="1"/>
</dbReference>
<dbReference type="PANTHER" id="PTHR11933:SF5">
    <property type="entry name" value="MITOCHONDRIAL TRNA-SPECIFIC 2-THIOURIDYLASE 1"/>
    <property type="match status" value="1"/>
</dbReference>
<dbReference type="PANTHER" id="PTHR11933">
    <property type="entry name" value="TRNA 5-METHYLAMINOMETHYL-2-THIOURIDYLATE -METHYLTRANSFERASE"/>
    <property type="match status" value="1"/>
</dbReference>
<dbReference type="Pfam" id="PF03054">
    <property type="entry name" value="tRNA_Me_trans"/>
    <property type="match status" value="1"/>
</dbReference>
<dbReference type="Pfam" id="PF20258">
    <property type="entry name" value="tRNA_Me_trans_C"/>
    <property type="match status" value="1"/>
</dbReference>
<dbReference type="Pfam" id="PF20259">
    <property type="entry name" value="tRNA_Me_trans_M"/>
    <property type="match status" value="1"/>
</dbReference>
<dbReference type="SUPFAM" id="SSF52402">
    <property type="entry name" value="Adenine nucleotide alpha hydrolases-like"/>
    <property type="match status" value="1"/>
</dbReference>
<gene>
    <name evidence="1" type="primary">mnmA</name>
    <name type="synonym">trmU</name>
    <name type="ordered locus">FRAAL5861</name>
</gene>
<sequence>MRVLAAMSGGVDSAVAAARAVDAGHDVTGVHLALSRSPESDRTGARGCCTLEDARDARRAADVLGIPFYVWDLAERFETEVIDQFVESYAAGRTPNPCVRCNERIKFAAVLDRALALGFDAVVTGHHARLDPDGTLRRSVDPAKDQSYVLGTLRPEQLGAARFPLGDSTKAQVRREAAARGLAVADKPDSHDICFISGGDTGGWLRERIGSRPGPIVDSRTGQTLGEHDGTFAFTVGQRRGLRLGHPAPDGRPRYVLDISPVTSTVTVGPAEELDIRRLVADRAAWPHEGVVTCQAQVRAHGGVVAAEAEARGDDLVVTLDTPVRGTAAGQAVVLYDGDRVLGGGHIRVTAA</sequence>
<name>MNMA_FRAAA</name>
<feature type="chain" id="PRO_1000009522" description="tRNA-specific 2-thiouridylase MnmA">
    <location>
        <begin position="1"/>
        <end position="352"/>
    </location>
</feature>
<feature type="region of interest" description="Interaction with tRNA" evidence="1">
    <location>
        <begin position="144"/>
        <end position="146"/>
    </location>
</feature>
<feature type="active site" description="Nucleophile" evidence="1">
    <location>
        <position position="101"/>
    </location>
</feature>
<feature type="active site" description="Cysteine persulfide intermediate" evidence="1">
    <location>
        <position position="194"/>
    </location>
</feature>
<feature type="binding site" evidence="1">
    <location>
        <begin position="6"/>
        <end position="13"/>
    </location>
    <ligand>
        <name>ATP</name>
        <dbReference type="ChEBI" id="CHEBI:30616"/>
    </ligand>
</feature>
<feature type="binding site" evidence="1">
    <location>
        <position position="32"/>
    </location>
    <ligand>
        <name>ATP</name>
        <dbReference type="ChEBI" id="CHEBI:30616"/>
    </ligand>
</feature>
<feature type="binding site" evidence="1">
    <location>
        <position position="125"/>
    </location>
    <ligand>
        <name>ATP</name>
        <dbReference type="ChEBI" id="CHEBI:30616"/>
    </ligand>
</feature>
<feature type="site" description="Interaction with tRNA" evidence="1">
    <location>
        <position position="126"/>
    </location>
</feature>
<feature type="site" description="Interaction with tRNA" evidence="1">
    <location>
        <position position="331"/>
    </location>
</feature>
<feature type="disulfide bond" description="Alternate" evidence="1">
    <location>
        <begin position="101"/>
        <end position="194"/>
    </location>
</feature>
<evidence type="ECO:0000255" key="1">
    <source>
        <dbReference type="HAMAP-Rule" id="MF_00144"/>
    </source>
</evidence>